<gene>
    <name evidence="2" type="primary">foxo</name>
    <name type="ORF">GH22274</name>
</gene>
<keyword id="KW-0010">Activator</keyword>
<keyword id="KW-0131">Cell cycle</keyword>
<keyword id="KW-0963">Cytoplasm</keyword>
<keyword id="KW-0217">Developmental protein</keyword>
<keyword id="KW-0221">Differentiation</keyword>
<keyword id="KW-0238">DNA-binding</keyword>
<keyword id="KW-0341">Growth regulation</keyword>
<keyword id="KW-0539">Nucleus</keyword>
<keyword id="KW-0597">Phosphoprotein</keyword>
<keyword id="KW-1185">Reference proteome</keyword>
<keyword id="KW-0804">Transcription</keyword>
<keyword id="KW-0805">Transcription regulation</keyword>
<organism>
    <name type="scientific">Drosophila grimshawi</name>
    <name type="common">Hawaiian fruit fly</name>
    <name type="synonym">Idiomyia grimshawi</name>
    <dbReference type="NCBI Taxonomy" id="7222"/>
    <lineage>
        <taxon>Eukaryota</taxon>
        <taxon>Metazoa</taxon>
        <taxon>Ecdysozoa</taxon>
        <taxon>Arthropoda</taxon>
        <taxon>Hexapoda</taxon>
        <taxon>Insecta</taxon>
        <taxon>Pterygota</taxon>
        <taxon>Neoptera</taxon>
        <taxon>Endopterygota</taxon>
        <taxon>Diptera</taxon>
        <taxon>Brachycera</taxon>
        <taxon>Muscomorpha</taxon>
        <taxon>Ephydroidea</taxon>
        <taxon>Drosophilidae</taxon>
        <taxon>Drosophila</taxon>
        <taxon>Hawaiian Drosophila</taxon>
    </lineage>
</organism>
<sequence length="630" mass="70007">MDGFVQEWSNLPRSDNGLHMDQLVGELPTDGGFEPQTRARSNTWPCPRPENFVEPVDELDSTKASNQQLADPQQAMQNANAAKKNSSRRNAWGNLSYADLITHAIGSATDKRLTLSQIYEWMVQNVAYFKDKGDSNSSAGWKNSIRHNLSLHSRFMRVQNEGTGKSSWWMLNPDAKPGKSVRRRAASMETSRYEKRRGRAKKRVEALRQAGAVGLNDATPSPSSSVSEGLDHFPESPLHSGGFQLSPDFRQRASSNASSCGRLSPIRALDLEPDWGYSVDYQNTTMTQAQAQALDQLTGSMADELKLQNDMLQQQGFSAASGLPTQPPPPYQQQQQQQQQQAQQQSQLPQGYTLNGPVSAPGYNTLQPQAQQQQQQQQQQQQQQQQPQCLLHRSLNCGCLHSTRDGLSPNSVTTTMSPAYPNSEPSSDSLNTYSNSILLDAASDNGSLLVQQQQQQQQQQQQQQQQQQQLSSGLEGQCLEALNSEQIDEFNLENFQGGLECNVEELLQQEMIYDGLLDINIPLPAVNTNATNVILTNNSTNNSSSGCNISAGVQLSCSQLQAELQLQQQQQQQQQQQQQQQQQQQQQQQQLLLSNNNNNNNNSLELATQTATRVQYTQPSVVTSPPSWVH</sequence>
<reference evidence="5" key="1">
    <citation type="journal article" date="2007" name="Nature">
        <title>Evolution of genes and genomes on the Drosophila phylogeny.</title>
        <authorList>
            <consortium name="Drosophila 12 genomes consortium"/>
        </authorList>
    </citation>
    <scope>NUCLEOTIDE SEQUENCE [LARGE SCALE GENOMIC DNA]</scope>
    <source>
        <strain evidence="5">Tucson 15287-2541.00</strain>
    </source>
</reference>
<proteinExistence type="inferred from homology"/>
<accession>B4JSC2</accession>
<comment type="function">
    <text evidence="1">Transcription factor involved in the regulation of the insulin signaling pathway. Consistently activates both the downstream target Thor\d4EBP and the feedback control target InR. Involved in negative regulation of the cell cycle, modulating cell growth and proliferation. In response to cellular stresses, such as nutrient deprivation or increased levels of reactive oxygen species, foxo is activated and inhibits growth through the action of target genes such as Thor. Foxo activated in the adult fat body can regulate lifespan in adults; an insulin peptide itself may function as one secondary messenger of insulin-regulated aging. Also regulates Lip4, homolog of human acid lipases, thereby acting as a key modulator of lipid metabolism by insulin signaling and integrates insulin responses to glucose and lipid homeostasis (By similarity).</text>
</comment>
<comment type="subunit">
    <text evidence="2">Interacts with melt.</text>
</comment>
<comment type="subcellular location">
    <subcellularLocation>
        <location evidence="2">Cytoplasm</location>
    </subcellularLocation>
    <subcellularLocation>
        <location evidence="2 3">Nucleus</location>
    </subcellularLocation>
    <text evidence="2">When phosphorylated, translocated from nucleus to cytoplasm. Dephosphorylation triggers nuclear translocation (By similarity).</text>
</comment>
<evidence type="ECO:0000250" key="1"/>
<evidence type="ECO:0000250" key="2">
    <source>
        <dbReference type="UniProtKB" id="Q95V55"/>
    </source>
</evidence>
<evidence type="ECO:0000255" key="3">
    <source>
        <dbReference type="PROSITE-ProRule" id="PRU00089"/>
    </source>
</evidence>
<evidence type="ECO:0000256" key="4">
    <source>
        <dbReference type="SAM" id="MobiDB-lite"/>
    </source>
</evidence>
<evidence type="ECO:0000312" key="5">
    <source>
        <dbReference type="EMBL" id="EDV94662.1"/>
    </source>
</evidence>
<protein>
    <recommendedName>
        <fullName evidence="2">Forkhead box protein O</fullName>
    </recommendedName>
</protein>
<dbReference type="EMBL" id="CH916373">
    <property type="protein sequence ID" value="EDV94662.1"/>
    <property type="molecule type" value="Genomic_DNA"/>
</dbReference>
<dbReference type="SMR" id="B4JSC2"/>
<dbReference type="FunCoup" id="B4JSC2">
    <property type="interactions" value="336"/>
</dbReference>
<dbReference type="STRING" id="7222.B4JSC2"/>
<dbReference type="EnsemblMetazoa" id="FBtr0157688">
    <property type="protein sequence ID" value="FBpp0156180"/>
    <property type="gene ID" value="FBgn0129734"/>
</dbReference>
<dbReference type="EnsemblMetazoa" id="XM_001993890.3">
    <property type="protein sequence ID" value="XP_001993926.1"/>
    <property type="gene ID" value="LOC6567837"/>
</dbReference>
<dbReference type="GeneID" id="6567837"/>
<dbReference type="KEGG" id="dgr:6567837"/>
<dbReference type="CTD" id="41709"/>
<dbReference type="eggNOG" id="KOG2294">
    <property type="taxonomic scope" value="Eukaryota"/>
</dbReference>
<dbReference type="HOGENOM" id="CLU_024472_1_0_1"/>
<dbReference type="InParanoid" id="B4JSC2"/>
<dbReference type="OMA" id="WWMINRD"/>
<dbReference type="OrthoDB" id="5954824at2759"/>
<dbReference type="PhylomeDB" id="B4JSC2"/>
<dbReference type="ChiTaRS" id="foxo">
    <property type="organism name" value="fly"/>
</dbReference>
<dbReference type="Proteomes" id="UP000001070">
    <property type="component" value="Unassembled WGS sequence"/>
</dbReference>
<dbReference type="GO" id="GO:0005737">
    <property type="term" value="C:cytoplasm"/>
    <property type="evidence" value="ECO:0000250"/>
    <property type="project" value="UniProtKB"/>
</dbReference>
<dbReference type="GO" id="GO:0005634">
    <property type="term" value="C:nucleus"/>
    <property type="evidence" value="ECO:0000250"/>
    <property type="project" value="UniProtKB"/>
</dbReference>
<dbReference type="GO" id="GO:0003700">
    <property type="term" value="F:DNA-binding transcription factor activity"/>
    <property type="evidence" value="ECO:0000250"/>
    <property type="project" value="UniProtKB"/>
</dbReference>
<dbReference type="GO" id="GO:0000981">
    <property type="term" value="F:DNA-binding transcription factor activity, RNA polymerase II-specific"/>
    <property type="evidence" value="ECO:0007669"/>
    <property type="project" value="TreeGrafter"/>
</dbReference>
<dbReference type="GO" id="GO:0000978">
    <property type="term" value="F:RNA polymerase II cis-regulatory region sequence-specific DNA binding"/>
    <property type="evidence" value="ECO:0007669"/>
    <property type="project" value="TreeGrafter"/>
</dbReference>
<dbReference type="GO" id="GO:0030154">
    <property type="term" value="P:cell differentiation"/>
    <property type="evidence" value="ECO:0007669"/>
    <property type="project" value="UniProtKB-KW"/>
</dbReference>
<dbReference type="GO" id="GO:0042593">
    <property type="term" value="P:glucose homeostasis"/>
    <property type="evidence" value="ECO:0000250"/>
    <property type="project" value="UniProtKB"/>
</dbReference>
<dbReference type="GO" id="GO:0030308">
    <property type="term" value="P:negative regulation of cell growth"/>
    <property type="evidence" value="ECO:0000250"/>
    <property type="project" value="UniProtKB"/>
</dbReference>
<dbReference type="GO" id="GO:0008285">
    <property type="term" value="P:negative regulation of cell population proliferation"/>
    <property type="evidence" value="ECO:0000250"/>
    <property type="project" value="UniProtKB"/>
</dbReference>
<dbReference type="GO" id="GO:0046627">
    <property type="term" value="P:negative regulation of insulin receptor signaling pathway"/>
    <property type="evidence" value="ECO:0000250"/>
    <property type="project" value="UniProtKB"/>
</dbReference>
<dbReference type="GO" id="GO:0006355">
    <property type="term" value="P:regulation of DNA-templated transcription"/>
    <property type="evidence" value="ECO:0000250"/>
    <property type="project" value="UniProtKB"/>
</dbReference>
<dbReference type="GO" id="GO:0019216">
    <property type="term" value="P:regulation of lipid metabolic process"/>
    <property type="evidence" value="ECO:0000250"/>
    <property type="project" value="UniProtKB"/>
</dbReference>
<dbReference type="CDD" id="cd20032">
    <property type="entry name" value="FH_FOXO"/>
    <property type="match status" value="1"/>
</dbReference>
<dbReference type="FunFam" id="1.10.10.10:FF:000032">
    <property type="entry name" value="Forkhead box protein O4"/>
    <property type="match status" value="1"/>
</dbReference>
<dbReference type="Gene3D" id="1.10.10.10">
    <property type="entry name" value="Winged helix-like DNA-binding domain superfamily/Winged helix DNA-binding domain"/>
    <property type="match status" value="1"/>
</dbReference>
<dbReference type="InterPro" id="IPR001766">
    <property type="entry name" value="Fork_head_dom"/>
</dbReference>
<dbReference type="InterPro" id="IPR030456">
    <property type="entry name" value="TF_fork_head_CS_2"/>
</dbReference>
<dbReference type="InterPro" id="IPR036388">
    <property type="entry name" value="WH-like_DNA-bd_sf"/>
</dbReference>
<dbReference type="InterPro" id="IPR036390">
    <property type="entry name" value="WH_DNA-bd_sf"/>
</dbReference>
<dbReference type="PANTHER" id="PTHR45767">
    <property type="entry name" value="FORKHEAD BOX PROTEIN O"/>
    <property type="match status" value="1"/>
</dbReference>
<dbReference type="PANTHER" id="PTHR45767:SF2">
    <property type="entry name" value="FORKHEAD BOX PROTEIN O"/>
    <property type="match status" value="1"/>
</dbReference>
<dbReference type="Pfam" id="PF00250">
    <property type="entry name" value="Forkhead"/>
    <property type="match status" value="1"/>
</dbReference>
<dbReference type="PRINTS" id="PR00053">
    <property type="entry name" value="FORKHEAD"/>
</dbReference>
<dbReference type="SMART" id="SM00339">
    <property type="entry name" value="FH"/>
    <property type="match status" value="1"/>
</dbReference>
<dbReference type="SUPFAM" id="SSF46785">
    <property type="entry name" value="Winged helix' DNA-binding domain"/>
    <property type="match status" value="1"/>
</dbReference>
<dbReference type="PROSITE" id="PS00658">
    <property type="entry name" value="FORK_HEAD_2"/>
    <property type="match status" value="1"/>
</dbReference>
<dbReference type="PROSITE" id="PS50039">
    <property type="entry name" value="FORK_HEAD_3"/>
    <property type="match status" value="1"/>
</dbReference>
<name>FOXO_DROGR</name>
<feature type="chain" id="PRO_0000396506" description="Forkhead box protein O">
    <location>
        <begin position="1"/>
        <end position="630"/>
    </location>
</feature>
<feature type="DNA-binding region" description="Fork-head" evidence="3">
    <location>
        <begin position="92"/>
        <end position="198"/>
    </location>
</feature>
<feature type="region of interest" description="Disordered" evidence="4">
    <location>
        <begin position="1"/>
        <end position="45"/>
    </location>
</feature>
<feature type="region of interest" description="Disordered" evidence="4">
    <location>
        <begin position="214"/>
        <end position="260"/>
    </location>
</feature>
<feature type="region of interest" description="Disordered" evidence="4">
    <location>
        <begin position="318"/>
        <end position="379"/>
    </location>
</feature>
<feature type="region of interest" description="Disordered" evidence="4">
    <location>
        <begin position="403"/>
        <end position="432"/>
    </location>
</feature>
<feature type="compositionally biased region" description="Polar residues" evidence="4">
    <location>
        <begin position="218"/>
        <end position="227"/>
    </location>
</feature>
<feature type="compositionally biased region" description="Low complexity" evidence="4">
    <location>
        <begin position="332"/>
        <end position="350"/>
    </location>
</feature>
<feature type="compositionally biased region" description="Low complexity" evidence="4">
    <location>
        <begin position="367"/>
        <end position="379"/>
    </location>
</feature>
<feature type="compositionally biased region" description="Polar residues" evidence="4">
    <location>
        <begin position="408"/>
        <end position="417"/>
    </location>
</feature>
<feature type="compositionally biased region" description="Polar residues" evidence="4">
    <location>
        <begin position="423"/>
        <end position="432"/>
    </location>
</feature>
<feature type="modified residue" description="Phosphothreonine; by PKB/AKT1" evidence="2">
    <location>
        <position position="43"/>
    </location>
</feature>
<feature type="modified residue" description="Phosphoserine; by PKB/AKT1" evidence="2">
    <location>
        <position position="187"/>
    </location>
</feature>
<feature type="modified residue" description="Phosphoserine; by PKB/AKT1" evidence="2">
    <location>
        <position position="255"/>
    </location>
</feature>
<feature type="modified residue" description="Phosphoserine" evidence="2">
    <location>
        <position position="258"/>
    </location>
</feature>
<feature type="modified residue" description="Phosphoserine" evidence="2">
    <location>
        <position position="259"/>
    </location>
</feature>
<feature type="modified residue" description="Phosphoserine" evidence="2">
    <location>
        <position position="264"/>
    </location>
</feature>